<dbReference type="SMR" id="P0CY84"/>
<dbReference type="GO" id="GO:0005576">
    <property type="term" value="C:extracellular region"/>
    <property type="evidence" value="ECO:0007669"/>
    <property type="project" value="UniProtKB-SubCell"/>
</dbReference>
<dbReference type="GO" id="GO:0008200">
    <property type="term" value="F:ion channel inhibitor activity"/>
    <property type="evidence" value="ECO:0007669"/>
    <property type="project" value="InterPro"/>
</dbReference>
<dbReference type="GO" id="GO:0090729">
    <property type="term" value="F:toxin activity"/>
    <property type="evidence" value="ECO:0007669"/>
    <property type="project" value="UniProtKB-KW"/>
</dbReference>
<dbReference type="InterPro" id="IPR004214">
    <property type="entry name" value="Conotoxin"/>
</dbReference>
<dbReference type="InterPro" id="IPR011062">
    <property type="entry name" value="Contryphan_CS"/>
</dbReference>
<dbReference type="Pfam" id="PF02950">
    <property type="entry name" value="Conotoxin"/>
    <property type="match status" value="1"/>
</dbReference>
<dbReference type="PROSITE" id="PS60027">
    <property type="entry name" value="CONTRYPHAN"/>
    <property type="match status" value="1"/>
</dbReference>
<accession>P0CY84</accession>
<comment type="function">
    <text evidence="1 2 5 6">Its target is unknown, but this toxin may modulate voltage-activated calcium channels (Cav) or calcium-dependent potassium channels (KCa).</text>
</comment>
<comment type="subcellular location">
    <subcellularLocation>
        <location evidence="10">Secreted</location>
    </subcellularLocation>
</comment>
<comment type="tissue specificity">
    <text evidence="10">Expressed by the venom duct.</text>
</comment>
<comment type="domain">
    <text evidence="9">The cysteine framework is C-C.</text>
</comment>
<comment type="miscellaneous">
    <text evidence="4">Exists in two forms, due to cis-trans isomerization at 56-Cys-hydroxyPro-57. The cis conformation is the major form.</text>
</comment>
<comment type="similarity">
    <text evidence="9">Belongs to the O2 superfamily. Contryphan family.</text>
</comment>
<organism>
    <name type="scientific">Conus bullatus</name>
    <name type="common">Bubble cone</name>
    <dbReference type="NCBI Taxonomy" id="89438"/>
    <lineage>
        <taxon>Eukaryota</taxon>
        <taxon>Metazoa</taxon>
        <taxon>Spiralia</taxon>
        <taxon>Lophotrochozoa</taxon>
        <taxon>Mollusca</taxon>
        <taxon>Gastropoda</taxon>
        <taxon>Caenogastropoda</taxon>
        <taxon>Neogastropoda</taxon>
        <taxon>Conoidea</taxon>
        <taxon>Conidae</taxon>
        <taxon>Conus</taxon>
        <taxon>Textilia</taxon>
    </lineage>
</organism>
<feature type="signal peptide" evidence="7">
    <location>
        <begin position="1"/>
        <end position="21"/>
    </location>
</feature>
<feature type="propeptide" id="PRO_0000409985" evidence="9">
    <location>
        <begin position="22"/>
        <end position="54"/>
    </location>
</feature>
<feature type="peptide" id="PRO_0000409986" description="Contryphan-Bu" evidence="9">
    <location>
        <begin position="55"/>
        <end position="62"/>
    </location>
</feature>
<feature type="region of interest" description="Disordered" evidence="8">
    <location>
        <begin position="21"/>
        <end position="45"/>
    </location>
</feature>
<feature type="compositionally biased region" description="Basic and acidic residues" evidence="8">
    <location>
        <begin position="23"/>
        <end position="39"/>
    </location>
</feature>
<feature type="modified residue" description="4-hydroxyproline" evidence="3">
    <location>
        <position position="57"/>
    </location>
</feature>
<feature type="modified residue" description="D-tryptophan" evidence="3">
    <location>
        <position position="58"/>
    </location>
</feature>
<feature type="modified residue" description="Cysteine amide" evidence="3">
    <location>
        <position position="62"/>
    </location>
</feature>
<feature type="disulfide bond" evidence="3">
    <location>
        <begin position="56"/>
        <end position="62"/>
    </location>
</feature>
<keyword id="KW-0027">Amidation</keyword>
<keyword id="KW-0208">D-amino acid</keyword>
<keyword id="KW-1015">Disulfide bond</keyword>
<keyword id="KW-0379">Hydroxylation</keyword>
<keyword id="KW-0872">Ion channel impairing toxin</keyword>
<keyword id="KW-0528">Neurotoxin</keyword>
<keyword id="KW-0964">Secreted</keyword>
<keyword id="KW-0732">Signal</keyword>
<keyword id="KW-0800">Toxin</keyword>
<evidence type="ECO:0000250" key="1">
    <source>
        <dbReference type="UniProtKB" id="P0C248"/>
    </source>
</evidence>
<evidence type="ECO:0000250" key="2">
    <source>
        <dbReference type="UniProtKB" id="P0C250"/>
    </source>
</evidence>
<evidence type="ECO:0000250" key="3">
    <source>
        <dbReference type="UniProtKB" id="P58786"/>
    </source>
</evidence>
<evidence type="ECO:0000250" key="4">
    <source>
        <dbReference type="UniProtKB" id="P58787"/>
    </source>
</evidence>
<evidence type="ECO:0000250" key="5">
    <source>
        <dbReference type="UniProtKB" id="P62903"/>
    </source>
</evidence>
<evidence type="ECO:0000250" key="6">
    <source>
        <dbReference type="UniProtKB" id="P83047"/>
    </source>
</evidence>
<evidence type="ECO:0000255" key="7"/>
<evidence type="ECO:0000256" key="8">
    <source>
        <dbReference type="SAM" id="MobiDB-lite"/>
    </source>
</evidence>
<evidence type="ECO:0000305" key="9"/>
<evidence type="ECO:0000305" key="10">
    <source>
    </source>
</evidence>
<protein>
    <recommendedName>
        <fullName evidence="9">Contryphan-Bu</fullName>
    </recommendedName>
</protein>
<proteinExistence type="inferred from homology"/>
<sequence>MGKLTILVLVAAVLLSTQVMGQGDRDQPAARNAVPRDDNPGGASAKLMNLLHRSKCPWSPWCG</sequence>
<reference key="1">
    <citation type="journal article" date="2011" name="BMC Genomics">
        <title>Characterization of the Conus bullatus genome and its venom-duct transcriptome.</title>
        <authorList>
            <person name="Hu H."/>
            <person name="Bandyopadhyay P.K."/>
            <person name="Olivera B.M."/>
            <person name="Yandell M."/>
        </authorList>
    </citation>
    <scope>NUCLEOTIDE SEQUENCE [MRNA]</scope>
    <source>
        <tissue>Venom duct</tissue>
    </source>
</reference>
<name>COW_CONBU</name>